<keyword id="KW-0053">Apoptosis</keyword>
<keyword id="KW-0966">Cell projection</keyword>
<keyword id="KW-1015">Disulfide bond</keyword>
<keyword id="KW-0249">Electron transport</keyword>
<keyword id="KW-0256">Endoplasmic reticulum</keyword>
<keyword id="KW-0274">FAD</keyword>
<keyword id="KW-0285">Flavoprotein</keyword>
<keyword id="KW-0325">Glycoprotein</keyword>
<keyword id="KW-0333">Golgi apparatus</keyword>
<keyword id="KW-0472">Membrane</keyword>
<keyword id="KW-0560">Oxidoreductase</keyword>
<keyword id="KW-0597">Phosphoprotein</keyword>
<keyword id="KW-0676">Redox-active center</keyword>
<keyword id="KW-1185">Reference proteome</keyword>
<keyword id="KW-0964">Secreted</keyword>
<keyword id="KW-0732">Signal</keyword>
<keyword id="KW-0813">Transport</keyword>
<proteinExistence type="evidence at transcript level"/>
<gene>
    <name evidence="4" type="primary">ERO1A</name>
    <name type="synonym">ERO1L</name>
</gene>
<organism>
    <name type="scientific">Bos taurus</name>
    <name type="common">Bovine</name>
    <dbReference type="NCBI Taxonomy" id="9913"/>
    <lineage>
        <taxon>Eukaryota</taxon>
        <taxon>Metazoa</taxon>
        <taxon>Chordata</taxon>
        <taxon>Craniata</taxon>
        <taxon>Vertebrata</taxon>
        <taxon>Euteleostomi</taxon>
        <taxon>Mammalia</taxon>
        <taxon>Eutheria</taxon>
        <taxon>Laurasiatheria</taxon>
        <taxon>Artiodactyla</taxon>
        <taxon>Ruminantia</taxon>
        <taxon>Pecora</taxon>
        <taxon>Bovidae</taxon>
        <taxon>Bovinae</taxon>
        <taxon>Bos</taxon>
    </lineage>
</organism>
<comment type="function">
    <text evidence="4">Oxidoreductase involved in disulfide bond formation in the endoplasmic reticulum. Efficiently reoxidizes P4HB/PDI, the enzyme catalyzing protein disulfide formation, in order to allow P4HB to sustain additional rounds of disulfide formation. Following P4HB reoxidation, passes its electrons to molecular oxygen via FAD, leading to the production of reactive oxygen species (ROS) in the cell. Required for the proper folding of immunoglobulins. Plays an important role in ER stress-induced, CHOP-dependent apoptosis by activating the inositol 1,4,5-trisphosphate receptor IP3R1.</text>
</comment>
<comment type="cofactor">
    <cofactor evidence="4">
        <name>FAD</name>
        <dbReference type="ChEBI" id="CHEBI:57692"/>
    </cofactor>
</comment>
<comment type="activity regulation">
    <text evidence="1">Enzyme activity is tightly regulated to prevent the accumulation of reactive oxygen species in the endoplasmic reticulum. Reversibly down-regulated by the formation of disulfide bonds between the active site Cys-94 and Cys-131, and between Cys-99 and Cys-104. Glutathione may be required to regulate its activity in the endoplasmic reticulum (By similarity).</text>
</comment>
<comment type="subunit">
    <text evidence="4">Predominantly monomer. May function both as a monomer and a homodimer. Interacts with PDILT. Interacts with ERP44; the interaction results in retention of ERO1A in the endoplasmic reticulum.</text>
</comment>
<comment type="subcellular location">
    <subcellularLocation>
        <location evidence="4">Endoplasmic reticulum membrane</location>
        <topology evidence="4">Peripheral membrane protein</topology>
        <orientation evidence="4">Lumenal side</orientation>
    </subcellularLocation>
    <subcellularLocation>
        <location evidence="4">Golgi apparatus lumen</location>
    </subcellularLocation>
    <subcellularLocation>
        <location evidence="4">Secreted</location>
    </subcellularLocation>
    <subcellularLocation>
        <location evidence="3">Cell projection</location>
        <location evidence="3">Dendrite</location>
    </subcellularLocation>
    <text evidence="3 4">The association with ERP44 is essential for its retention in the endoplasmic reticulum (By similarity). In neurons, it localizes to dendrites (By similarity).</text>
</comment>
<comment type="PTM">
    <text evidence="1">The Cys-94/Cys-99 and Cys-394/Cys-397 disulfide bonds constitute the redox-active center. The Cys-94/Cys-99 disulfide bond may accept electron from P4HB and funnel them to the active site disulfide Cys-394/Cys-397. The regulatory Cys-99/Cys-104 disulfide bond stabilizes the other regulatory bond Cys-94/Cys-131 (By similarity).</text>
</comment>
<comment type="PTM">
    <text evidence="2 4">Phosphorylated on Ser-145 by FAM20C in the Golgi which increases its enzymatic activity (By similarity). Phosphorylation is induced by lactation (By similarity). It is also induced by hypoxia and reductive stress (By similarity).</text>
</comment>
<comment type="similarity">
    <text evidence="6">Belongs to the EROs family.</text>
</comment>
<accession>A5PJN2</accession>
<dbReference type="EC" id="1.8.4.-" evidence="4"/>
<dbReference type="EMBL" id="BC142179">
    <property type="protein sequence ID" value="AAI42180.1"/>
    <property type="molecule type" value="mRNA"/>
</dbReference>
<dbReference type="RefSeq" id="NP_001096818.1">
    <property type="nucleotide sequence ID" value="NM_001103348.1"/>
</dbReference>
<dbReference type="SMR" id="A5PJN2"/>
<dbReference type="FunCoup" id="A5PJN2">
    <property type="interactions" value="2743"/>
</dbReference>
<dbReference type="STRING" id="9913.ENSBTAP00000073559"/>
<dbReference type="GlyCosmos" id="A5PJN2">
    <property type="glycosylation" value="2 sites, No reported glycans"/>
</dbReference>
<dbReference type="GlyGen" id="A5PJN2">
    <property type="glycosylation" value="2 sites"/>
</dbReference>
<dbReference type="PaxDb" id="9913-ENSBTAP00000020878"/>
<dbReference type="PeptideAtlas" id="A5PJN2"/>
<dbReference type="GeneID" id="100125317"/>
<dbReference type="KEGG" id="bta:100125317"/>
<dbReference type="CTD" id="30001"/>
<dbReference type="VEuPathDB" id="HostDB:ENSBTAG00000015716"/>
<dbReference type="eggNOG" id="KOG2608">
    <property type="taxonomic scope" value="Eukaryota"/>
</dbReference>
<dbReference type="HOGENOM" id="CLU_023061_2_2_1"/>
<dbReference type="InParanoid" id="A5PJN2"/>
<dbReference type="OMA" id="PCGIRSE"/>
<dbReference type="OrthoDB" id="269384at2759"/>
<dbReference type="TreeFam" id="TF314471"/>
<dbReference type="Reactome" id="R-BTA-3299685">
    <property type="pathway name" value="Detoxification of Reactive Oxygen Species"/>
</dbReference>
<dbReference type="Proteomes" id="UP000009136">
    <property type="component" value="Chromosome 10"/>
</dbReference>
<dbReference type="Bgee" id="ENSBTAG00000015716">
    <property type="expression patterns" value="Expressed in milk and 106 other cell types or tissues"/>
</dbReference>
<dbReference type="GO" id="GO:0030425">
    <property type="term" value="C:dendrite"/>
    <property type="evidence" value="ECO:0007669"/>
    <property type="project" value="UniProtKB-SubCell"/>
</dbReference>
<dbReference type="GO" id="GO:0005783">
    <property type="term" value="C:endoplasmic reticulum"/>
    <property type="evidence" value="ECO:0000250"/>
    <property type="project" value="UniProtKB"/>
</dbReference>
<dbReference type="GO" id="GO:0005789">
    <property type="term" value="C:endoplasmic reticulum membrane"/>
    <property type="evidence" value="ECO:0000318"/>
    <property type="project" value="GO_Central"/>
</dbReference>
<dbReference type="GO" id="GO:0005615">
    <property type="term" value="C:extracellular space"/>
    <property type="evidence" value="ECO:0000250"/>
    <property type="project" value="UniProtKB"/>
</dbReference>
<dbReference type="GO" id="GO:0005796">
    <property type="term" value="C:Golgi lumen"/>
    <property type="evidence" value="ECO:0000250"/>
    <property type="project" value="UniProtKB"/>
</dbReference>
<dbReference type="GO" id="GO:0071949">
    <property type="term" value="F:FAD binding"/>
    <property type="evidence" value="ECO:0007669"/>
    <property type="project" value="InterPro"/>
</dbReference>
<dbReference type="GO" id="GO:0016491">
    <property type="term" value="F:oxidoreductase activity"/>
    <property type="evidence" value="ECO:0000250"/>
    <property type="project" value="UniProtKB"/>
</dbReference>
<dbReference type="GO" id="GO:0015035">
    <property type="term" value="F:protein-disulfide reductase activity"/>
    <property type="evidence" value="ECO:0000318"/>
    <property type="project" value="GO_Central"/>
</dbReference>
<dbReference type="GO" id="GO:0016972">
    <property type="term" value="F:thiol oxidase activity"/>
    <property type="evidence" value="ECO:0007669"/>
    <property type="project" value="InterPro"/>
</dbReference>
<dbReference type="GO" id="GO:0045454">
    <property type="term" value="P:cell redox homeostasis"/>
    <property type="evidence" value="ECO:0000250"/>
    <property type="project" value="UniProtKB"/>
</dbReference>
<dbReference type="GO" id="GO:0070059">
    <property type="term" value="P:intrinsic apoptotic signaling pathway in response to endoplasmic reticulum stress"/>
    <property type="evidence" value="ECO:0000250"/>
    <property type="project" value="UniProtKB"/>
</dbReference>
<dbReference type="GO" id="GO:0006457">
    <property type="term" value="P:protein folding"/>
    <property type="evidence" value="ECO:0000250"/>
    <property type="project" value="UniProtKB"/>
</dbReference>
<dbReference type="GO" id="GO:0034975">
    <property type="term" value="P:protein folding in endoplasmic reticulum"/>
    <property type="evidence" value="ECO:0000318"/>
    <property type="project" value="GO_Central"/>
</dbReference>
<dbReference type="GO" id="GO:0051209">
    <property type="term" value="P:release of sequestered calcium ion into cytosol"/>
    <property type="evidence" value="ECO:0000250"/>
    <property type="project" value="UniProtKB"/>
</dbReference>
<dbReference type="GO" id="GO:0034976">
    <property type="term" value="P:response to endoplasmic reticulum stress"/>
    <property type="evidence" value="ECO:0000250"/>
    <property type="project" value="UniProtKB"/>
</dbReference>
<dbReference type="InterPro" id="IPR007266">
    <property type="entry name" value="Ero1"/>
</dbReference>
<dbReference type="InterPro" id="IPR037192">
    <property type="entry name" value="ERO1-like_sf"/>
</dbReference>
<dbReference type="PANTHER" id="PTHR12613:SF1">
    <property type="entry name" value="ERO1-LIKE PROTEIN ALPHA"/>
    <property type="match status" value="1"/>
</dbReference>
<dbReference type="PANTHER" id="PTHR12613">
    <property type="entry name" value="ERO1-RELATED"/>
    <property type="match status" value="1"/>
</dbReference>
<dbReference type="Pfam" id="PF04137">
    <property type="entry name" value="ERO1"/>
    <property type="match status" value="1"/>
</dbReference>
<dbReference type="PIRSF" id="PIRSF017205">
    <property type="entry name" value="ERO1"/>
    <property type="match status" value="1"/>
</dbReference>
<dbReference type="SUPFAM" id="SSF110019">
    <property type="entry name" value="ERO1-like"/>
    <property type="match status" value="1"/>
</dbReference>
<reference key="1">
    <citation type="submission" date="2007-06" db="EMBL/GenBank/DDBJ databases">
        <authorList>
            <consortium name="NIH - Mammalian Gene Collection (MGC) project"/>
        </authorList>
    </citation>
    <scope>NUCLEOTIDE SEQUENCE [LARGE SCALE MRNA]</scope>
    <source>
        <strain>Hereford</strain>
        <tissue>Basal ganglia</tissue>
    </source>
</reference>
<evidence type="ECO:0000250" key="1"/>
<evidence type="ECO:0000250" key="2">
    <source>
        <dbReference type="UniProtKB" id="Q8R180"/>
    </source>
</evidence>
<evidence type="ECO:0000250" key="3">
    <source>
        <dbReference type="UniProtKB" id="Q8R4A1"/>
    </source>
</evidence>
<evidence type="ECO:0000250" key="4">
    <source>
        <dbReference type="UniProtKB" id="Q96HE7"/>
    </source>
</evidence>
<evidence type="ECO:0000255" key="5"/>
<evidence type="ECO:0000305" key="6"/>
<feature type="signal peptide" evidence="5">
    <location>
        <begin position="1"/>
        <end position="23"/>
    </location>
</feature>
<feature type="chain" id="PRO_0000368273" description="ERO1-like protein alpha">
    <location>
        <begin position="24"/>
        <end position="468"/>
    </location>
</feature>
<feature type="binding site" evidence="4">
    <location>
        <position position="187"/>
    </location>
    <ligand>
        <name>FAD</name>
        <dbReference type="ChEBI" id="CHEBI:57692"/>
    </ligand>
</feature>
<feature type="binding site" evidence="4">
    <location>
        <position position="189"/>
    </location>
    <ligand>
        <name>FAD</name>
        <dbReference type="ChEBI" id="CHEBI:57692"/>
    </ligand>
</feature>
<feature type="binding site" evidence="4">
    <location>
        <position position="200"/>
    </location>
    <ligand>
        <name>FAD</name>
        <dbReference type="ChEBI" id="CHEBI:57692"/>
    </ligand>
</feature>
<feature type="binding site" evidence="4">
    <location>
        <position position="252"/>
    </location>
    <ligand>
        <name>FAD</name>
        <dbReference type="ChEBI" id="CHEBI:57692"/>
    </ligand>
</feature>
<feature type="binding site" evidence="4">
    <location>
        <position position="255"/>
    </location>
    <ligand>
        <name>FAD</name>
        <dbReference type="ChEBI" id="CHEBI:57692"/>
    </ligand>
</feature>
<feature type="binding site" evidence="4">
    <location>
        <position position="287"/>
    </location>
    <ligand>
        <name>FAD</name>
        <dbReference type="ChEBI" id="CHEBI:57692"/>
    </ligand>
</feature>
<feature type="binding site" evidence="4">
    <location>
        <position position="300"/>
    </location>
    <ligand>
        <name>FAD</name>
        <dbReference type="ChEBI" id="CHEBI:57692"/>
    </ligand>
</feature>
<feature type="modified residue" description="Phosphoserine" evidence="4">
    <location>
        <position position="106"/>
    </location>
</feature>
<feature type="modified residue" description="Phosphoserine" evidence="4">
    <location>
        <position position="143"/>
    </location>
</feature>
<feature type="modified residue" description="Phosphoserine" evidence="4">
    <location>
        <position position="145"/>
    </location>
</feature>
<feature type="glycosylation site" description="N-linked (GlcNAc...) asparagine" evidence="5">
    <location>
        <position position="280"/>
    </location>
</feature>
<feature type="glycosylation site" description="N-linked (GlcNAc...) asparagine" evidence="5">
    <location>
        <position position="384"/>
    </location>
</feature>
<feature type="disulfide bond" evidence="4">
    <location>
        <begin position="35"/>
        <end position="48"/>
    </location>
</feature>
<feature type="disulfide bond" evidence="4">
    <location>
        <begin position="37"/>
        <end position="46"/>
    </location>
</feature>
<feature type="disulfide bond" evidence="4">
    <location>
        <begin position="85"/>
        <end position="391"/>
    </location>
</feature>
<feature type="disulfide bond" description="Alternate" evidence="4">
    <location>
        <begin position="94"/>
        <end position="131"/>
    </location>
</feature>
<feature type="disulfide bond" description="Redox-active; alternate" evidence="4">
    <location>
        <begin position="94"/>
        <end position="99"/>
    </location>
</feature>
<feature type="disulfide bond" description="Alternate" evidence="4">
    <location>
        <begin position="99"/>
        <end position="104"/>
    </location>
</feature>
<feature type="disulfide bond" evidence="4">
    <location>
        <begin position="208"/>
        <end position="241"/>
    </location>
</feature>
<feature type="disulfide bond" description="Redox-active" evidence="4">
    <location>
        <begin position="394"/>
        <end position="397"/>
    </location>
</feature>
<sequence>MGRRWGFLIGFLVAVGLLGLGHGEQQPSETAAQRCFCQVSGYLDDCTCDVETIDKFNNYRLFPRLQKLLESDYFRYYKVNLKRPCPFWNDINQCGRRDCAVKPCHSDEVPDGIKSASYKYSEEANNLIEECEQAERLGAVDESLSEETQKAVLQWTKHDDSSDNFCEVDDIQSPDAEYVDLLLNPERYTGYKGPDAWKIWNVIYEENCFKPQTIKRPLNPLASGQGKSEENTFYSWLEGLCVEKRAFYRLISGLHASINVHLSARYLLQDTWLEKKWGHNITEFQQRFDGILTEGEGPRRLKNLYFLYLIELRALSKVVPFFERPDFQLFTGNKDQDAENKMLLLEILHEIKSFPLHFDENSFFAGNKKEANKLKEDFRLHFRNISRIMDCVGCLKCRLWGKLQTQGLGTALKILFSEKLIANMPESGPSYEFHLTRQEIVSLFNAFGRISTSVKELENFRNLLQNIH</sequence>
<protein>
    <recommendedName>
        <fullName>ERO1-like protein alpha</fullName>
        <shortName>ERO1-L</shortName>
        <shortName>ERO1-L-alpha</shortName>
        <ecNumber evidence="4">1.8.4.-</ecNumber>
    </recommendedName>
    <alternativeName>
        <fullName evidence="4">Endoplasmic reticulum oxidoreductase alpha</fullName>
    </alternativeName>
    <alternativeName>
        <fullName>Endoplasmic reticulum oxidoreductin-1-like protein</fullName>
    </alternativeName>
    <alternativeName>
        <fullName>Oxidoreductin-1-L-alpha</fullName>
    </alternativeName>
</protein>
<name>ERO1A_BOVIN</name>